<proteinExistence type="inferred from homology"/>
<accession>B9DNQ4</accession>
<reference key="1">
    <citation type="journal article" date="2009" name="Appl. Environ. Microbiol.">
        <title>Genome analysis of the meat starter culture bacterium Staphylococcus carnosus TM300.</title>
        <authorList>
            <person name="Rosenstein R."/>
            <person name="Nerz C."/>
            <person name="Biswas L."/>
            <person name="Resch A."/>
            <person name="Raddatz G."/>
            <person name="Schuster S.C."/>
            <person name="Goetz F."/>
        </authorList>
    </citation>
    <scope>NUCLEOTIDE SEQUENCE [LARGE SCALE GENOMIC DNA]</scope>
    <source>
        <strain>TM300</strain>
    </source>
</reference>
<keyword id="KW-0963">Cytoplasm</keyword>
<keyword id="KW-0251">Elongation factor</keyword>
<keyword id="KW-0648">Protein biosynthesis</keyword>
<keyword id="KW-1185">Reference proteome</keyword>
<name>EFP_STACT</name>
<dbReference type="EMBL" id="AM295250">
    <property type="protein sequence ID" value="CAL28060.1"/>
    <property type="molecule type" value="Genomic_DNA"/>
</dbReference>
<dbReference type="RefSeq" id="WP_015900401.1">
    <property type="nucleotide sequence ID" value="NC_012121.1"/>
</dbReference>
<dbReference type="SMR" id="B9DNQ4"/>
<dbReference type="GeneID" id="93793577"/>
<dbReference type="KEGG" id="sca:SCA_1152"/>
<dbReference type="eggNOG" id="COG0231">
    <property type="taxonomic scope" value="Bacteria"/>
</dbReference>
<dbReference type="HOGENOM" id="CLU_074944_0_1_9"/>
<dbReference type="OrthoDB" id="9801844at2"/>
<dbReference type="BioCyc" id="SCAR396513:SCA_RS05770-MONOMER"/>
<dbReference type="UniPathway" id="UPA00345"/>
<dbReference type="Proteomes" id="UP000000444">
    <property type="component" value="Chromosome"/>
</dbReference>
<dbReference type="GO" id="GO:0005737">
    <property type="term" value="C:cytoplasm"/>
    <property type="evidence" value="ECO:0007669"/>
    <property type="project" value="UniProtKB-SubCell"/>
</dbReference>
<dbReference type="GO" id="GO:0003746">
    <property type="term" value="F:translation elongation factor activity"/>
    <property type="evidence" value="ECO:0007669"/>
    <property type="project" value="UniProtKB-UniRule"/>
</dbReference>
<dbReference type="GO" id="GO:0043043">
    <property type="term" value="P:peptide biosynthetic process"/>
    <property type="evidence" value="ECO:0007669"/>
    <property type="project" value="InterPro"/>
</dbReference>
<dbReference type="CDD" id="cd04470">
    <property type="entry name" value="S1_EF-P_repeat_1"/>
    <property type="match status" value="1"/>
</dbReference>
<dbReference type="CDD" id="cd05794">
    <property type="entry name" value="S1_EF-P_repeat_2"/>
    <property type="match status" value="1"/>
</dbReference>
<dbReference type="FunFam" id="2.30.30.30:FF:000010">
    <property type="entry name" value="Elongation factor P"/>
    <property type="match status" value="1"/>
</dbReference>
<dbReference type="FunFam" id="2.40.50.140:FF:000004">
    <property type="entry name" value="Elongation factor P"/>
    <property type="match status" value="1"/>
</dbReference>
<dbReference type="FunFam" id="2.40.50.140:FF:000009">
    <property type="entry name" value="Elongation factor P"/>
    <property type="match status" value="1"/>
</dbReference>
<dbReference type="Gene3D" id="2.30.30.30">
    <property type="match status" value="1"/>
</dbReference>
<dbReference type="Gene3D" id="2.40.50.140">
    <property type="entry name" value="Nucleic acid-binding proteins"/>
    <property type="match status" value="2"/>
</dbReference>
<dbReference type="HAMAP" id="MF_00141">
    <property type="entry name" value="EF_P"/>
    <property type="match status" value="1"/>
</dbReference>
<dbReference type="InterPro" id="IPR015365">
    <property type="entry name" value="Elong-fact-P_C"/>
</dbReference>
<dbReference type="InterPro" id="IPR012340">
    <property type="entry name" value="NA-bd_OB-fold"/>
</dbReference>
<dbReference type="InterPro" id="IPR014722">
    <property type="entry name" value="Rib_uL2_dom2"/>
</dbReference>
<dbReference type="InterPro" id="IPR020599">
    <property type="entry name" value="Transl_elong_fac_P/YeiP"/>
</dbReference>
<dbReference type="InterPro" id="IPR013185">
    <property type="entry name" value="Transl_elong_KOW-like"/>
</dbReference>
<dbReference type="InterPro" id="IPR001059">
    <property type="entry name" value="Transl_elong_P/YeiP_cen"/>
</dbReference>
<dbReference type="InterPro" id="IPR013852">
    <property type="entry name" value="Transl_elong_P/YeiP_CS"/>
</dbReference>
<dbReference type="InterPro" id="IPR011768">
    <property type="entry name" value="Transl_elongation_fac_P"/>
</dbReference>
<dbReference type="InterPro" id="IPR008991">
    <property type="entry name" value="Translation_prot_SH3-like_sf"/>
</dbReference>
<dbReference type="NCBIfam" id="TIGR00038">
    <property type="entry name" value="efp"/>
    <property type="match status" value="1"/>
</dbReference>
<dbReference type="NCBIfam" id="NF001810">
    <property type="entry name" value="PRK00529.1"/>
    <property type="match status" value="1"/>
</dbReference>
<dbReference type="PANTHER" id="PTHR30053">
    <property type="entry name" value="ELONGATION FACTOR P"/>
    <property type="match status" value="1"/>
</dbReference>
<dbReference type="PANTHER" id="PTHR30053:SF12">
    <property type="entry name" value="ELONGATION FACTOR P (EF-P) FAMILY PROTEIN"/>
    <property type="match status" value="1"/>
</dbReference>
<dbReference type="Pfam" id="PF01132">
    <property type="entry name" value="EFP"/>
    <property type="match status" value="1"/>
</dbReference>
<dbReference type="Pfam" id="PF08207">
    <property type="entry name" value="EFP_N"/>
    <property type="match status" value="1"/>
</dbReference>
<dbReference type="Pfam" id="PF09285">
    <property type="entry name" value="Elong-fact-P_C"/>
    <property type="match status" value="1"/>
</dbReference>
<dbReference type="PIRSF" id="PIRSF005901">
    <property type="entry name" value="EF-P"/>
    <property type="match status" value="1"/>
</dbReference>
<dbReference type="SMART" id="SM01185">
    <property type="entry name" value="EFP"/>
    <property type="match status" value="1"/>
</dbReference>
<dbReference type="SMART" id="SM00841">
    <property type="entry name" value="Elong-fact-P_C"/>
    <property type="match status" value="1"/>
</dbReference>
<dbReference type="SUPFAM" id="SSF50249">
    <property type="entry name" value="Nucleic acid-binding proteins"/>
    <property type="match status" value="2"/>
</dbReference>
<dbReference type="SUPFAM" id="SSF50104">
    <property type="entry name" value="Translation proteins SH3-like domain"/>
    <property type="match status" value="1"/>
</dbReference>
<dbReference type="PROSITE" id="PS01275">
    <property type="entry name" value="EFP"/>
    <property type="match status" value="1"/>
</dbReference>
<gene>
    <name evidence="1" type="primary">efp</name>
    <name type="ordered locus">Sca_1152</name>
</gene>
<organism>
    <name type="scientific">Staphylococcus carnosus (strain TM300)</name>
    <dbReference type="NCBI Taxonomy" id="396513"/>
    <lineage>
        <taxon>Bacteria</taxon>
        <taxon>Bacillati</taxon>
        <taxon>Bacillota</taxon>
        <taxon>Bacilli</taxon>
        <taxon>Bacillales</taxon>
        <taxon>Staphylococcaceae</taxon>
        <taxon>Staphylococcus</taxon>
    </lineage>
</organism>
<evidence type="ECO:0000255" key="1">
    <source>
        <dbReference type="HAMAP-Rule" id="MF_00141"/>
    </source>
</evidence>
<protein>
    <recommendedName>
        <fullName evidence="1">Elongation factor P</fullName>
        <shortName evidence="1">EF-P</shortName>
    </recommendedName>
</protein>
<sequence>MISVNDFKTGLTISVDNGIWKVIDFQHVKPGKGSAFVRSKLRNLRTGAIQEKTFRAGEKVEPAMIENRRMQYLYDDGDMHVFMDNQTFEQTELPGDYLENELKFLKANMEVQIQTYEGETIGVELPKTVELTVTETEPGIKGDTATGATKSATVETGYTLNVPLFVNEGDVLVINTGDGSYVSRA</sequence>
<feature type="chain" id="PRO_1000123027" description="Elongation factor P">
    <location>
        <begin position="1"/>
        <end position="185"/>
    </location>
</feature>
<comment type="function">
    <text evidence="1">Involved in peptide bond synthesis. Stimulates efficient translation and peptide-bond synthesis on native or reconstituted 70S ribosomes in vitro. Probably functions indirectly by altering the affinity of the ribosome for aminoacyl-tRNA, thus increasing their reactivity as acceptors for peptidyl transferase.</text>
</comment>
<comment type="pathway">
    <text evidence="1">Protein biosynthesis; polypeptide chain elongation.</text>
</comment>
<comment type="subcellular location">
    <subcellularLocation>
        <location evidence="1">Cytoplasm</location>
    </subcellularLocation>
</comment>
<comment type="similarity">
    <text evidence="1">Belongs to the elongation factor P family.</text>
</comment>